<protein>
    <recommendedName>
        <fullName evidence="1">Probable protein kinase UbiB</fullName>
        <ecNumber evidence="1">2.7.-.-</ecNumber>
    </recommendedName>
    <alternativeName>
        <fullName evidence="1">Ubiquinone biosynthesis protein UbiB</fullName>
    </alternativeName>
</protein>
<name>UBIB_SALPC</name>
<evidence type="ECO:0000255" key="1">
    <source>
        <dbReference type="HAMAP-Rule" id="MF_00414"/>
    </source>
</evidence>
<dbReference type="EC" id="2.7.-.-" evidence="1"/>
<dbReference type="EMBL" id="CP000857">
    <property type="protein sequence ID" value="ACN48145.1"/>
    <property type="molecule type" value="Genomic_DNA"/>
</dbReference>
<dbReference type="RefSeq" id="WP_000187559.1">
    <property type="nucleotide sequence ID" value="NC_012125.1"/>
</dbReference>
<dbReference type="SMR" id="C0Q3E3"/>
<dbReference type="KEGG" id="sei:SPC_4080"/>
<dbReference type="HOGENOM" id="CLU_006533_0_0_6"/>
<dbReference type="UniPathway" id="UPA00232"/>
<dbReference type="Proteomes" id="UP000001599">
    <property type="component" value="Chromosome"/>
</dbReference>
<dbReference type="GO" id="GO:0005886">
    <property type="term" value="C:plasma membrane"/>
    <property type="evidence" value="ECO:0007669"/>
    <property type="project" value="UniProtKB-SubCell"/>
</dbReference>
<dbReference type="GO" id="GO:0005524">
    <property type="term" value="F:ATP binding"/>
    <property type="evidence" value="ECO:0007669"/>
    <property type="project" value="UniProtKB-KW"/>
</dbReference>
<dbReference type="GO" id="GO:0004672">
    <property type="term" value="F:protein kinase activity"/>
    <property type="evidence" value="ECO:0007669"/>
    <property type="project" value="UniProtKB-UniRule"/>
</dbReference>
<dbReference type="GO" id="GO:0010795">
    <property type="term" value="P:regulation of ubiquinone biosynthetic process"/>
    <property type="evidence" value="ECO:0007669"/>
    <property type="project" value="UniProtKB-UniRule"/>
</dbReference>
<dbReference type="GO" id="GO:0006744">
    <property type="term" value="P:ubiquinone biosynthetic process"/>
    <property type="evidence" value="ECO:0007669"/>
    <property type="project" value="UniProtKB-UniPathway"/>
</dbReference>
<dbReference type="CDD" id="cd13972">
    <property type="entry name" value="UbiB"/>
    <property type="match status" value="1"/>
</dbReference>
<dbReference type="HAMAP" id="MF_00414">
    <property type="entry name" value="UbiB"/>
    <property type="match status" value="1"/>
</dbReference>
<dbReference type="InterPro" id="IPR004147">
    <property type="entry name" value="ABC1_dom"/>
</dbReference>
<dbReference type="InterPro" id="IPR011009">
    <property type="entry name" value="Kinase-like_dom_sf"/>
</dbReference>
<dbReference type="InterPro" id="IPR010232">
    <property type="entry name" value="UbiB"/>
</dbReference>
<dbReference type="InterPro" id="IPR045308">
    <property type="entry name" value="UbiB_bact"/>
</dbReference>
<dbReference type="InterPro" id="IPR050154">
    <property type="entry name" value="UbiB_kinase"/>
</dbReference>
<dbReference type="NCBIfam" id="NF003404">
    <property type="entry name" value="PRK04750.1"/>
    <property type="match status" value="1"/>
</dbReference>
<dbReference type="NCBIfam" id="TIGR01982">
    <property type="entry name" value="UbiB"/>
    <property type="match status" value="1"/>
</dbReference>
<dbReference type="PANTHER" id="PTHR10566">
    <property type="entry name" value="CHAPERONE-ACTIVITY OF BC1 COMPLEX CABC1 -RELATED"/>
    <property type="match status" value="1"/>
</dbReference>
<dbReference type="PANTHER" id="PTHR10566:SF113">
    <property type="entry name" value="PROTEIN ACTIVITY OF BC1 COMPLEX KINASE 7, CHLOROPLASTIC"/>
    <property type="match status" value="1"/>
</dbReference>
<dbReference type="Pfam" id="PF03109">
    <property type="entry name" value="ABC1"/>
    <property type="match status" value="1"/>
</dbReference>
<dbReference type="SUPFAM" id="SSF56112">
    <property type="entry name" value="Protein kinase-like (PK-like)"/>
    <property type="match status" value="1"/>
</dbReference>
<reference key="1">
    <citation type="journal article" date="2009" name="PLoS ONE">
        <title>Salmonella paratyphi C: genetic divergence from Salmonella choleraesuis and pathogenic convergence with Salmonella typhi.</title>
        <authorList>
            <person name="Liu W.-Q."/>
            <person name="Feng Y."/>
            <person name="Wang Y."/>
            <person name="Zou Q.-H."/>
            <person name="Chen F."/>
            <person name="Guo J.-T."/>
            <person name="Peng Y.-H."/>
            <person name="Jin Y."/>
            <person name="Li Y.-G."/>
            <person name="Hu S.-N."/>
            <person name="Johnston R.N."/>
            <person name="Liu G.-R."/>
            <person name="Liu S.-L."/>
        </authorList>
    </citation>
    <scope>NUCLEOTIDE SEQUENCE [LARGE SCALE GENOMIC DNA]</scope>
    <source>
        <strain>RKS4594</strain>
    </source>
</reference>
<sequence length="546" mass="63239">MTPGEVRRLYFIIRTFLSYGLDELIPRMRLTLPLRLWRYSLFWMPNRHKDKLLGERLRLALQELGPVWIKFGQMLSTRRDLFPPQIADQLALLQDKVAPFDGRLAKAQIEEAMGGLPVEAWFDDFDIQPLASASIAQVHTARLKSNGKEVVIKVIRPDILPVIQADLKLIYRLARWVPRLLPDGRRLRPTEVVREYEKTLIDELNLLRESANAIQLRRNFENSPMLYIPEVYSDYCSQNMMVMERIYGIPVSDVAALEKNGTNMKLLAERGVKVFFTQVFRDSFFHADMHPGNIFVSHEHPENPQYIGIDCGIVGSLNKEDKRYLAENFIAFFNRDYRKVAELHVDSGWVPPDTNVEDFEFAIRTVCEPIFEKPLAEISFGHVLLNLFNTARRFNMEVQPQLVLLQKTLLYVEGVGRQLYPQLDLWKTAKPFLESWIKDQVGIPALTRALKEKAPFWVEKMPEIPELVYDSLRQGKYLQHSVDKIARELQVNHVRQSQSRYLLGIGATLLLSGSFLLVNRPEWGLMPGWLMVGGVVVWLVGWRKTR</sequence>
<comment type="function">
    <text evidence="1">Is probably a protein kinase regulator of UbiI activity which is involved in aerobic coenzyme Q (ubiquinone) biosynthesis.</text>
</comment>
<comment type="pathway">
    <text>Cofactor biosynthesis; ubiquinone biosynthesis [regulation].</text>
</comment>
<comment type="subcellular location">
    <subcellularLocation>
        <location evidence="1">Cell inner membrane</location>
        <topology evidence="1">Multi-pass membrane protein</topology>
    </subcellularLocation>
</comment>
<comment type="similarity">
    <text evidence="1">Belongs to the ABC1 family. UbiB subfamily.</text>
</comment>
<organism>
    <name type="scientific">Salmonella paratyphi C (strain RKS4594)</name>
    <dbReference type="NCBI Taxonomy" id="476213"/>
    <lineage>
        <taxon>Bacteria</taxon>
        <taxon>Pseudomonadati</taxon>
        <taxon>Pseudomonadota</taxon>
        <taxon>Gammaproteobacteria</taxon>
        <taxon>Enterobacterales</taxon>
        <taxon>Enterobacteriaceae</taxon>
        <taxon>Salmonella</taxon>
    </lineage>
</organism>
<gene>
    <name evidence="1" type="primary">ubiB</name>
    <name type="ordered locus">SPC_4080</name>
</gene>
<proteinExistence type="inferred from homology"/>
<keyword id="KW-0067">ATP-binding</keyword>
<keyword id="KW-0997">Cell inner membrane</keyword>
<keyword id="KW-1003">Cell membrane</keyword>
<keyword id="KW-0418">Kinase</keyword>
<keyword id="KW-0472">Membrane</keyword>
<keyword id="KW-0547">Nucleotide-binding</keyword>
<keyword id="KW-0808">Transferase</keyword>
<keyword id="KW-0812">Transmembrane</keyword>
<keyword id="KW-1133">Transmembrane helix</keyword>
<keyword id="KW-0831">Ubiquinone biosynthesis</keyword>
<feature type="chain" id="PRO_1000134819" description="Probable protein kinase UbiB">
    <location>
        <begin position="1"/>
        <end position="546"/>
    </location>
</feature>
<feature type="transmembrane region" description="Helical" evidence="1">
    <location>
        <begin position="501"/>
        <end position="521"/>
    </location>
</feature>
<feature type="transmembrane region" description="Helical" evidence="1">
    <location>
        <begin position="522"/>
        <end position="542"/>
    </location>
</feature>
<feature type="domain" description="Protein kinase" evidence="1">
    <location>
        <begin position="124"/>
        <end position="502"/>
    </location>
</feature>
<feature type="active site" description="Proton acceptor" evidence="1">
    <location>
        <position position="288"/>
    </location>
</feature>
<feature type="binding site" evidence="1">
    <location>
        <begin position="130"/>
        <end position="138"/>
    </location>
    <ligand>
        <name>ATP</name>
        <dbReference type="ChEBI" id="CHEBI:30616"/>
    </ligand>
</feature>
<feature type="binding site" evidence="1">
    <location>
        <position position="153"/>
    </location>
    <ligand>
        <name>ATP</name>
        <dbReference type="ChEBI" id="CHEBI:30616"/>
    </ligand>
</feature>
<accession>C0Q3E3</accession>